<dbReference type="EMBL" id="CP000789">
    <property type="protein sequence ID" value="ABU71894.1"/>
    <property type="molecule type" value="Genomic_DNA"/>
</dbReference>
<dbReference type="RefSeq" id="WP_012128481.1">
    <property type="nucleotide sequence ID" value="NC_009783.1"/>
</dbReference>
<dbReference type="KEGG" id="vha:VIBHAR_02941"/>
<dbReference type="PATRIC" id="fig|338187.25.peg.3246"/>
<dbReference type="Proteomes" id="UP000008152">
    <property type="component" value="Chromosome I"/>
</dbReference>
<dbReference type="GO" id="GO:0005886">
    <property type="term" value="C:plasma membrane"/>
    <property type="evidence" value="ECO:0007669"/>
    <property type="project" value="UniProtKB-SubCell"/>
</dbReference>
<dbReference type="HAMAP" id="MF_01101">
    <property type="entry name" value="UPF0208"/>
    <property type="match status" value="1"/>
</dbReference>
<dbReference type="InterPro" id="IPR007334">
    <property type="entry name" value="UPF0208"/>
</dbReference>
<dbReference type="NCBIfam" id="NF002493">
    <property type="entry name" value="PRK01816.1"/>
    <property type="match status" value="1"/>
</dbReference>
<dbReference type="Pfam" id="PF04217">
    <property type="entry name" value="DUF412"/>
    <property type="match status" value="1"/>
</dbReference>
<gene>
    <name type="ordered locus">VIBHAR_02941</name>
</gene>
<name>Y2941_VIBC1</name>
<organism>
    <name type="scientific">Vibrio campbellii (strain ATCC BAA-1116)</name>
    <dbReference type="NCBI Taxonomy" id="2902295"/>
    <lineage>
        <taxon>Bacteria</taxon>
        <taxon>Pseudomonadati</taxon>
        <taxon>Pseudomonadota</taxon>
        <taxon>Gammaproteobacteria</taxon>
        <taxon>Vibrionales</taxon>
        <taxon>Vibrionaceae</taxon>
        <taxon>Vibrio</taxon>
    </lineage>
</organism>
<feature type="chain" id="PRO_1000064985" description="UPF0208 membrane protein VIBHAR_02941">
    <location>
        <begin position="1"/>
        <end position="150"/>
    </location>
</feature>
<feature type="transmembrane region" description="Helical" evidence="1">
    <location>
        <begin position="42"/>
        <end position="62"/>
    </location>
</feature>
<feature type="transmembrane region" description="Helical" evidence="1">
    <location>
        <begin position="70"/>
        <end position="90"/>
    </location>
</feature>
<keyword id="KW-0997">Cell inner membrane</keyword>
<keyword id="KW-1003">Cell membrane</keyword>
<keyword id="KW-0472">Membrane</keyword>
<keyword id="KW-0812">Transmembrane</keyword>
<keyword id="KW-1133">Transmembrane helix</keyword>
<reference key="1">
    <citation type="submission" date="2007-08" db="EMBL/GenBank/DDBJ databases">
        <authorList>
            <consortium name="The Vibrio harveyi Genome Sequencing Project"/>
            <person name="Bassler B."/>
            <person name="Clifton S.W."/>
            <person name="Fulton L."/>
            <person name="Delehaunty K."/>
            <person name="Fronick C."/>
            <person name="Harrison M."/>
            <person name="Markivic C."/>
            <person name="Fulton R."/>
            <person name="Tin-Wollam A.-M."/>
            <person name="Shah N."/>
            <person name="Pepin K."/>
            <person name="Nash W."/>
            <person name="Thiruvilangam P."/>
            <person name="Bhonagiri V."/>
            <person name="Waters C."/>
            <person name="Tu K.C."/>
            <person name="Irgon J."/>
            <person name="Wilson R.K."/>
        </authorList>
    </citation>
    <scope>NUCLEOTIDE SEQUENCE [LARGE SCALE GENOMIC DNA]</scope>
    <source>
        <strain>ATCC BAA-1116 / BB120</strain>
    </source>
</reference>
<accession>A7MVD8</accession>
<proteinExistence type="inferred from homology"/>
<protein>
    <recommendedName>
        <fullName evidence="1">UPF0208 membrane protein VIBHAR_02941</fullName>
    </recommendedName>
</protein>
<comment type="subcellular location">
    <subcellularLocation>
        <location evidence="1">Cell inner membrane</location>
        <topology evidence="1">Multi-pass membrane protein</topology>
    </subcellularLocation>
</comment>
<comment type="similarity">
    <text evidence="1">Belongs to the UPF0208 family.</text>
</comment>
<sequence length="150" mass="17202">MSKQVGLIHSLKDGQSYMEIWPVRKELNAIFPEQRIIKATRFGIKVMPAVAAISVLTQMAFNNYDSLPQAIVVALFAISMPLQGMWWLGSRSNTKLPPALASWYRELHQKITETGFALEPVKARPRYKELAVILNRAFRQLDKTALERWF</sequence>
<evidence type="ECO:0000255" key="1">
    <source>
        <dbReference type="HAMAP-Rule" id="MF_01101"/>
    </source>
</evidence>